<comment type="function">
    <text evidence="1">Regulator of type 1 phosphatases which maintains protein phosphatase activity under strict control.</text>
</comment>
<comment type="subcellular location">
    <subcellularLocation>
        <location evidence="1">Nucleus</location>
    </subcellularLocation>
</comment>
<comment type="similarity">
    <text evidence="3">Belongs to the YPI1 family.</text>
</comment>
<organism>
    <name type="scientific">Chaetomium globosum (strain ATCC 6205 / CBS 148.51 / DSM 1962 / NBRC 6347 / NRRL 1970)</name>
    <name type="common">Soil fungus</name>
    <dbReference type="NCBI Taxonomy" id="306901"/>
    <lineage>
        <taxon>Eukaryota</taxon>
        <taxon>Fungi</taxon>
        <taxon>Dikarya</taxon>
        <taxon>Ascomycota</taxon>
        <taxon>Pezizomycotina</taxon>
        <taxon>Sordariomycetes</taxon>
        <taxon>Sordariomycetidae</taxon>
        <taxon>Sordariales</taxon>
        <taxon>Chaetomiaceae</taxon>
        <taxon>Chaetomium</taxon>
    </lineage>
</organism>
<keyword id="KW-0539">Nucleus</keyword>
<keyword id="KW-1185">Reference proteome</keyword>
<dbReference type="EMBL" id="CH408035">
    <property type="protein sequence ID" value="EAQ83913.1"/>
    <property type="molecule type" value="Genomic_DNA"/>
</dbReference>
<dbReference type="RefSeq" id="XP_001228244.1">
    <property type="nucleotide sequence ID" value="XM_001228243.1"/>
</dbReference>
<dbReference type="SMR" id="Q2GNY7"/>
<dbReference type="STRING" id="306901.Q2GNY7"/>
<dbReference type="GeneID" id="4396593"/>
<dbReference type="VEuPathDB" id="FungiDB:CHGG_10317"/>
<dbReference type="eggNOG" id="KOG4102">
    <property type="taxonomic scope" value="Eukaryota"/>
</dbReference>
<dbReference type="HOGENOM" id="CLU_098333_0_1_1"/>
<dbReference type="InParanoid" id="Q2GNY7"/>
<dbReference type="OMA" id="RRHIQWA"/>
<dbReference type="OrthoDB" id="307488at2759"/>
<dbReference type="Proteomes" id="UP000001056">
    <property type="component" value="Unassembled WGS sequence"/>
</dbReference>
<dbReference type="GO" id="GO:0005634">
    <property type="term" value="C:nucleus"/>
    <property type="evidence" value="ECO:0007669"/>
    <property type="project" value="UniProtKB-SubCell"/>
</dbReference>
<dbReference type="GO" id="GO:0008157">
    <property type="term" value="F:protein phosphatase 1 binding"/>
    <property type="evidence" value="ECO:0007669"/>
    <property type="project" value="TreeGrafter"/>
</dbReference>
<dbReference type="GO" id="GO:0004865">
    <property type="term" value="F:protein serine/threonine phosphatase inhibitor activity"/>
    <property type="evidence" value="ECO:0007669"/>
    <property type="project" value="InterPro"/>
</dbReference>
<dbReference type="InterPro" id="IPR011107">
    <property type="entry name" value="PPI_Ypi1"/>
</dbReference>
<dbReference type="PANTHER" id="PTHR20835:SF0">
    <property type="entry name" value="E3 UBIQUITIN-PROTEIN LIGASE PPP1R11"/>
    <property type="match status" value="1"/>
</dbReference>
<dbReference type="PANTHER" id="PTHR20835">
    <property type="entry name" value="E3 UBIQUITIN-PROTEIN LIGASE PPP1R11-RELATED"/>
    <property type="match status" value="1"/>
</dbReference>
<dbReference type="Pfam" id="PF07491">
    <property type="entry name" value="PPI_Ypi1"/>
    <property type="match status" value="1"/>
</dbReference>
<accession>Q2GNY7</accession>
<sequence>MSSAAPRSQQRQQQRQPSRPAPSQTETTPSTTPQTHTQPQAILRLRGAHAPTGRSVQWRSDVVDNEGLGRKKSKVCCIYHRPRGVDESSDSSSSSSSDSSDSDSDADSDSGRASGSGKKTGDGNHKQGHAHDCDGHHSHRGSRGQGKARRKRRPSPNAYEKMPRYDKPGKDGDGDGSGGSGEGKGKGVPGQGPQGA</sequence>
<reference key="1">
    <citation type="journal article" date="2015" name="Genome Announc.">
        <title>Draft genome sequence of the cellulolytic fungus Chaetomium globosum.</title>
        <authorList>
            <person name="Cuomo C.A."/>
            <person name="Untereiner W.A."/>
            <person name="Ma L.-J."/>
            <person name="Grabherr M."/>
            <person name="Birren B.W."/>
        </authorList>
    </citation>
    <scope>NUCLEOTIDE SEQUENCE [LARGE SCALE GENOMIC DNA]</scope>
    <source>
        <strain>ATCC 6205 / CBS 148.51 / DSM 1962 / NBRC 6347 / NRRL 1970</strain>
    </source>
</reference>
<proteinExistence type="inferred from homology"/>
<gene>
    <name type="primary">YPI1</name>
    <name type="ORF">CHGG_10317</name>
</gene>
<feature type="chain" id="PRO_0000333472" description="Type 1 phosphatases regulator YPI1">
    <location>
        <begin position="1"/>
        <end position="196"/>
    </location>
</feature>
<feature type="region of interest" description="Disordered" evidence="2">
    <location>
        <begin position="1"/>
        <end position="196"/>
    </location>
</feature>
<feature type="compositionally biased region" description="Low complexity" evidence="2">
    <location>
        <begin position="1"/>
        <end position="40"/>
    </location>
</feature>
<feature type="compositionally biased region" description="Low complexity" evidence="2">
    <location>
        <begin position="90"/>
        <end position="99"/>
    </location>
</feature>
<feature type="compositionally biased region" description="Basic and acidic residues" evidence="2">
    <location>
        <begin position="119"/>
        <end position="136"/>
    </location>
</feature>
<feature type="compositionally biased region" description="Basic residues" evidence="2">
    <location>
        <begin position="137"/>
        <end position="154"/>
    </location>
</feature>
<feature type="compositionally biased region" description="Basic and acidic residues" evidence="2">
    <location>
        <begin position="161"/>
        <end position="173"/>
    </location>
</feature>
<feature type="compositionally biased region" description="Gly residues" evidence="2">
    <location>
        <begin position="175"/>
        <end position="196"/>
    </location>
</feature>
<protein>
    <recommendedName>
        <fullName>Type 1 phosphatases regulator YPI1</fullName>
    </recommendedName>
</protein>
<name>YPI1_CHAGB</name>
<evidence type="ECO:0000250" key="1"/>
<evidence type="ECO:0000256" key="2">
    <source>
        <dbReference type="SAM" id="MobiDB-lite"/>
    </source>
</evidence>
<evidence type="ECO:0000305" key="3"/>